<gene>
    <name type="primary">vanW</name>
    <name type="ordered locus">EF_2296</name>
</gene>
<sequence>MNRKRLTQRFPFLLPMRQAQRKICFYAGMRFDGCCYAQTIGEKTLPYLLFETDCALYNHNTGFDMIYQENKVFNLKLAAKTLNGLLIKPGETFSFWRLVRHADKDTPYKDGLTVANGKLTTMSGGGMCQMSNLLFWVFLHTPLTIIQRSGHVVKEFPEPNSDEIKGVDATISEGWIDLKVRNDTDCTYQIWVTLDDEKIIGQVFADKQPQALYKIANGSIQYVRESGGIYEYAKVERMQVALGTGEIIDCKLLYTNKCKICYPLPESVDIQEANQ</sequence>
<organism>
    <name type="scientific">Enterococcus faecalis (strain ATCC 700802 / V583)</name>
    <dbReference type="NCBI Taxonomy" id="226185"/>
    <lineage>
        <taxon>Bacteria</taxon>
        <taxon>Bacillati</taxon>
        <taxon>Bacillota</taxon>
        <taxon>Bacilli</taxon>
        <taxon>Lactobacillales</taxon>
        <taxon>Enterococcaceae</taxon>
        <taxon>Enterococcus</taxon>
    </lineage>
</organism>
<reference key="1">
    <citation type="journal article" date="1996" name="J. Bacteriol.">
        <title>Regulation of VanB-type vancomycin resistance gene expression by the VanS(B)-VanR(B) two-component regulatory system in Enterococcus faecalis V583.</title>
        <authorList>
            <person name="Evers S."/>
            <person name="Courvalin P."/>
        </authorList>
    </citation>
    <scope>NUCLEOTIDE SEQUENCE [GENOMIC DNA]</scope>
    <source>
        <strain>ATCC 700802 / V583</strain>
    </source>
</reference>
<reference key="2">
    <citation type="journal article" date="2003" name="Science">
        <title>Role of mobile DNA in the evolution of vancomycin-resistant Enterococcus faecalis.</title>
        <authorList>
            <person name="Paulsen I.T."/>
            <person name="Banerjei L."/>
            <person name="Myers G.S.A."/>
            <person name="Nelson K.E."/>
            <person name="Seshadri R."/>
            <person name="Read T.D."/>
            <person name="Fouts D.E."/>
            <person name="Eisen J.A."/>
            <person name="Gill S.R."/>
            <person name="Heidelberg J.F."/>
            <person name="Tettelin H."/>
            <person name="Dodson R.J."/>
            <person name="Umayam L.A."/>
            <person name="Brinkac L.M."/>
            <person name="Beanan M.J."/>
            <person name="Daugherty S.C."/>
            <person name="DeBoy R.T."/>
            <person name="Durkin S.A."/>
            <person name="Kolonay J.F."/>
            <person name="Madupu R."/>
            <person name="Nelson W.C."/>
            <person name="Vamathevan J.J."/>
            <person name="Tran B."/>
            <person name="Upton J."/>
            <person name="Hansen T."/>
            <person name="Shetty J."/>
            <person name="Khouri H.M."/>
            <person name="Utterback T.R."/>
            <person name="Radune D."/>
            <person name="Ketchum K.A."/>
            <person name="Dougherty B.A."/>
            <person name="Fraser C.M."/>
        </authorList>
    </citation>
    <scope>NUCLEOTIDE SEQUENCE [LARGE SCALE GENOMIC DNA]</scope>
    <source>
        <strain>ATCC 700802 / V583</strain>
    </source>
</reference>
<dbReference type="EMBL" id="U35369">
    <property type="protein sequence ID" value="AAB05625.1"/>
    <property type="molecule type" value="Genomic_DNA"/>
</dbReference>
<dbReference type="EMBL" id="AE016830">
    <property type="protein sequence ID" value="AAO82023.1"/>
    <property type="molecule type" value="Genomic_DNA"/>
</dbReference>
<dbReference type="RefSeq" id="NP_815953.1">
    <property type="nucleotide sequence ID" value="NC_004668.1"/>
</dbReference>
<dbReference type="STRING" id="226185.EF_2296"/>
<dbReference type="CARD" id="ARO:3002964">
    <property type="molecule name" value="vanW_in_vanB_cl"/>
    <property type="mechanism identifier" value="ARO:0001001"/>
    <property type="mechanism name" value="antibiotic target alteration"/>
</dbReference>
<dbReference type="EnsemblBacteria" id="AAO82023">
    <property type="protein sequence ID" value="AAO82023"/>
    <property type="gene ID" value="EF_2296"/>
</dbReference>
<dbReference type="KEGG" id="efa:EF2296"/>
<dbReference type="PATRIC" id="fig|226185.45.peg.1236"/>
<dbReference type="eggNOG" id="COG2720">
    <property type="taxonomic scope" value="Bacteria"/>
</dbReference>
<dbReference type="HOGENOM" id="CLU_072547_1_0_9"/>
<dbReference type="Proteomes" id="UP000001415">
    <property type="component" value="Chromosome"/>
</dbReference>
<dbReference type="InterPro" id="IPR052913">
    <property type="entry name" value="Glycopeptide_resist_protein"/>
</dbReference>
<dbReference type="InterPro" id="IPR007391">
    <property type="entry name" value="Vancomycin_resist_VanW"/>
</dbReference>
<dbReference type="NCBIfam" id="NF033122">
    <property type="entry name" value="vanW-B"/>
    <property type="match status" value="1"/>
</dbReference>
<dbReference type="NCBIfam" id="NF033128">
    <property type="entry name" value="vanW-gen"/>
    <property type="match status" value="1"/>
</dbReference>
<dbReference type="PANTHER" id="PTHR35788:SF1">
    <property type="entry name" value="EXPORTED PROTEIN"/>
    <property type="match status" value="1"/>
</dbReference>
<dbReference type="PANTHER" id="PTHR35788">
    <property type="entry name" value="EXPORTED PROTEIN-RELATED"/>
    <property type="match status" value="1"/>
</dbReference>
<dbReference type="Pfam" id="PF04294">
    <property type="entry name" value="VanW"/>
    <property type="match status" value="1"/>
</dbReference>
<comment type="induction">
    <text>By vancomycin, mediated by VanS/VanR.</text>
</comment>
<keyword id="KW-1185">Reference proteome</keyword>
<proteinExistence type="evidence at transcript level"/>
<name>VANW_ENTFA</name>
<protein>
    <recommendedName>
        <fullName>Vancomycin B-type resistance protein VanW</fullName>
    </recommendedName>
</protein>
<accession>Q47747</accession>
<feature type="chain" id="PRO_0000065761" description="Vancomycin B-type resistance protein VanW">
    <location>
        <begin position="1"/>
        <end position="275"/>
    </location>
</feature>